<comment type="function">
    <text>Flagellin is the subunit protein which polymerizes to form the filaments of bacterial flagella.</text>
</comment>
<comment type="subunit">
    <text>Heteromer of flaA and flaB.</text>
</comment>
<comment type="subcellular location">
    <subcellularLocation>
        <location>Secreted</location>
    </subcellularLocation>
    <subcellularLocation>
        <location>Bacterial flagellum</location>
    </subcellularLocation>
</comment>
<comment type="similarity">
    <text evidence="2">Belongs to the bacterial flagellin family.</text>
</comment>
<gene>
    <name type="primary">flaB</name>
    <name type="ordered locus">Cj1338c</name>
</gene>
<proteinExistence type="inferred from homology"/>
<sequence>MGFRINTNIGALNAHANSVVNARELDKSLSRLSSGLRINSAADDASGMAIADSLRSQAATLGQAINNGNDAIGILQTADKAMDEQLKILDTIKTKATQAAQDGQSLKTRTMLQADINRLMEELDNIANTTSFNGKQLLSGNFINQEFQIGASSNQTIKATIGATQSSKIGLTRFETGGRISSSGEVQFTLKNYNGIDDFQFQKVVISTSVGTGLGALAEEINKSADKTGVRATFTVETRGIAAVRAGTTSDTFAINGVTIGQVAYEDGDGNGALVAAINSVKDTTGVEASIDANGQLLLTSREGRGIKIDGNIGGGAFINADMKENYGRLSLVKNDGKDILISGSNLSSAGFGATQFISQASVSLRESKGRFDANIADAMGFGSANKGVVLGGYSSVSAYMSSAGSGFSSGSGYSVGSGKNYSTGFANAIAISAASQLSTVYNVSAGSGFSSGSTLSQFATMKTTAFGVKDETAGVTTLKGAMAVMDIAETATTNLDQIRADIGSVQNQLQVTINNITVTQVNVKAAESTIRDVDFAAESANFSKYNILAQSGSYAMSQANAVQQNVLKLLQ</sequence>
<organism>
    <name type="scientific">Campylobacter jejuni subsp. jejuni serotype O:2 (strain ATCC 700819 / NCTC 11168)</name>
    <dbReference type="NCBI Taxonomy" id="192222"/>
    <lineage>
        <taxon>Bacteria</taxon>
        <taxon>Pseudomonadati</taxon>
        <taxon>Campylobacterota</taxon>
        <taxon>Epsilonproteobacteria</taxon>
        <taxon>Campylobacterales</taxon>
        <taxon>Campylobacteraceae</taxon>
        <taxon>Campylobacter</taxon>
    </lineage>
</organism>
<dbReference type="EMBL" id="AL111168">
    <property type="protein sequence ID" value="CAL35450.1"/>
    <property type="molecule type" value="Genomic_DNA"/>
</dbReference>
<dbReference type="PIR" id="G81277">
    <property type="entry name" value="G81277"/>
</dbReference>
<dbReference type="RefSeq" id="WP_002852395.1">
    <property type="nucleotide sequence ID" value="NC_002163.1"/>
</dbReference>
<dbReference type="RefSeq" id="YP_002344726.1">
    <property type="nucleotide sequence ID" value="NC_002163.1"/>
</dbReference>
<dbReference type="SMR" id="P56964"/>
<dbReference type="IntAct" id="P56964">
    <property type="interactions" value="5"/>
</dbReference>
<dbReference type="STRING" id="192222.Cj1338c"/>
<dbReference type="PaxDb" id="192222-Cj1338c"/>
<dbReference type="EnsemblBacteria" id="CAL35450">
    <property type="protein sequence ID" value="CAL35450"/>
    <property type="gene ID" value="Cj1338c"/>
</dbReference>
<dbReference type="GeneID" id="905630"/>
<dbReference type="KEGG" id="cje:Cj1338c"/>
<dbReference type="PATRIC" id="fig|192222.6.peg.1320"/>
<dbReference type="eggNOG" id="COG1344">
    <property type="taxonomic scope" value="Bacteria"/>
</dbReference>
<dbReference type="HOGENOM" id="CLU_011142_7_1_7"/>
<dbReference type="OrthoDB" id="9796789at2"/>
<dbReference type="Proteomes" id="UP000000799">
    <property type="component" value="Chromosome"/>
</dbReference>
<dbReference type="GO" id="GO:0009288">
    <property type="term" value="C:bacterial-type flagellum"/>
    <property type="evidence" value="ECO:0007669"/>
    <property type="project" value="UniProtKB-SubCell"/>
</dbReference>
<dbReference type="GO" id="GO:0005576">
    <property type="term" value="C:extracellular region"/>
    <property type="evidence" value="ECO:0007669"/>
    <property type="project" value="UniProtKB-SubCell"/>
</dbReference>
<dbReference type="GO" id="GO:0005198">
    <property type="term" value="F:structural molecule activity"/>
    <property type="evidence" value="ECO:0007669"/>
    <property type="project" value="InterPro"/>
</dbReference>
<dbReference type="Gene3D" id="3.30.70.2120">
    <property type="match status" value="2"/>
</dbReference>
<dbReference type="Gene3D" id="1.20.1330.10">
    <property type="entry name" value="f41 fragment of flagellin, N-terminal domain"/>
    <property type="match status" value="2"/>
</dbReference>
<dbReference type="Gene3D" id="6.10.10.10">
    <property type="entry name" value="Flagellar export chaperone, C-terminal domain"/>
    <property type="match status" value="1"/>
</dbReference>
<dbReference type="InterPro" id="IPR001492">
    <property type="entry name" value="Flagellin"/>
</dbReference>
<dbReference type="InterPro" id="IPR046358">
    <property type="entry name" value="Flagellin_C"/>
</dbReference>
<dbReference type="InterPro" id="IPR042187">
    <property type="entry name" value="Flagellin_C_sub2"/>
</dbReference>
<dbReference type="InterPro" id="IPR010810">
    <property type="entry name" value="Flagellin_hook_IN_motif"/>
</dbReference>
<dbReference type="InterPro" id="IPR001029">
    <property type="entry name" value="Flagellin_N"/>
</dbReference>
<dbReference type="NCBIfam" id="NF006264">
    <property type="entry name" value="PRK08411.1"/>
    <property type="match status" value="1"/>
</dbReference>
<dbReference type="NCBIfam" id="NF010115">
    <property type="entry name" value="PRK13588.1"/>
    <property type="match status" value="1"/>
</dbReference>
<dbReference type="NCBIfam" id="NF010116">
    <property type="entry name" value="PRK13589.1"/>
    <property type="match status" value="1"/>
</dbReference>
<dbReference type="PANTHER" id="PTHR42792">
    <property type="entry name" value="FLAGELLIN"/>
    <property type="match status" value="1"/>
</dbReference>
<dbReference type="PANTHER" id="PTHR42792:SF2">
    <property type="entry name" value="FLAGELLIN"/>
    <property type="match status" value="1"/>
</dbReference>
<dbReference type="Pfam" id="PF00700">
    <property type="entry name" value="Flagellin_C"/>
    <property type="match status" value="1"/>
</dbReference>
<dbReference type="Pfam" id="PF07196">
    <property type="entry name" value="Flagellin_IN"/>
    <property type="match status" value="2"/>
</dbReference>
<dbReference type="Pfam" id="PF00669">
    <property type="entry name" value="Flagellin_N"/>
    <property type="match status" value="1"/>
</dbReference>
<dbReference type="PRINTS" id="PR00207">
    <property type="entry name" value="FLAGELLIN"/>
</dbReference>
<dbReference type="SUPFAM" id="SSF64518">
    <property type="entry name" value="Phase 1 flagellin"/>
    <property type="match status" value="1"/>
</dbReference>
<feature type="initiator methionine" description="Removed" evidence="1">
    <location>
        <position position="1"/>
    </location>
</feature>
<feature type="chain" id="PRO_0000182596" description="Flagellin B">
    <location>
        <begin position="2"/>
        <end position="572"/>
    </location>
</feature>
<accession>P56964</accession>
<accession>Q0P8S1</accession>
<accession>Q9PMW1</accession>
<keyword id="KW-0975">Bacterial flagellum</keyword>
<keyword id="KW-1185">Reference proteome</keyword>
<keyword id="KW-0964">Secreted</keyword>
<evidence type="ECO:0000250" key="1"/>
<evidence type="ECO:0000305" key="2"/>
<protein>
    <recommendedName>
        <fullName>Flagellin B</fullName>
    </recommendedName>
</protein>
<name>FLB1_CAMJE</name>
<reference key="1">
    <citation type="journal article" date="2000" name="Nature">
        <title>The genome sequence of the food-borne pathogen Campylobacter jejuni reveals hypervariable sequences.</title>
        <authorList>
            <person name="Parkhill J."/>
            <person name="Wren B.W."/>
            <person name="Mungall K.L."/>
            <person name="Ketley J.M."/>
            <person name="Churcher C.M."/>
            <person name="Basham D."/>
            <person name="Chillingworth T."/>
            <person name="Davies R.M."/>
            <person name="Feltwell T."/>
            <person name="Holroyd S."/>
            <person name="Jagels K."/>
            <person name="Karlyshev A.V."/>
            <person name="Moule S."/>
            <person name="Pallen M.J."/>
            <person name="Penn C.W."/>
            <person name="Quail M.A."/>
            <person name="Rajandream M.A."/>
            <person name="Rutherford K.M."/>
            <person name="van Vliet A.H.M."/>
            <person name="Whitehead S."/>
            <person name="Barrell B.G."/>
        </authorList>
    </citation>
    <scope>NUCLEOTIDE SEQUENCE [LARGE SCALE GENOMIC DNA]</scope>
    <source>
        <strain>ATCC 700819 / NCTC 11168</strain>
    </source>
</reference>